<proteinExistence type="evidence at transcript level"/>
<name>RBL_PTYGA</name>
<organism evidence="3">
    <name type="scientific">Ptychomitrium gardneri</name>
    <name type="common">Gardner's ptychomitrium moss</name>
    <dbReference type="NCBI Taxonomy" id="61565"/>
    <lineage>
        <taxon>Eukaryota</taxon>
        <taxon>Viridiplantae</taxon>
        <taxon>Streptophyta</taxon>
        <taxon>Embryophyta</taxon>
        <taxon>Bryophyta</taxon>
        <taxon>Bryophytina</taxon>
        <taxon>Bryopsida</taxon>
        <taxon>Dicranidae</taxon>
        <taxon>Grimmiales</taxon>
        <taxon>Ptychomitriaceae</taxon>
        <taxon>Ptychomitrium</taxon>
    </lineage>
</organism>
<evidence type="ECO:0000255" key="1">
    <source>
        <dbReference type="HAMAP-Rule" id="MF_01338"/>
    </source>
</evidence>
<evidence type="ECO:0000305" key="2"/>
<evidence type="ECO:0000312" key="3">
    <source>
        <dbReference type="EMBL" id="AAC96063.1"/>
    </source>
</evidence>
<accession>O98360</accession>
<accession>Q9GE58</accession>
<gene>
    <name evidence="1" type="primary">rbcL</name>
</gene>
<geneLocation type="chloroplast" evidence="3"/>
<feature type="chain" id="PRO_0000062578" description="Ribulose bisphosphate carboxylase large chain">
    <location>
        <begin position="1" status="less than"/>
        <end position="440" status="greater than"/>
    </location>
</feature>
<feature type="active site" description="Proton acceptor" evidence="1">
    <location>
        <position position="165"/>
    </location>
</feature>
<feature type="active site" description="Proton acceptor" evidence="1">
    <location>
        <position position="284"/>
    </location>
</feature>
<feature type="binding site" description="in homodimeric partner" evidence="1">
    <location>
        <position position="113"/>
    </location>
    <ligand>
        <name>substrate</name>
    </ligand>
</feature>
<feature type="binding site" evidence="1">
    <location>
        <position position="163"/>
    </location>
    <ligand>
        <name>substrate</name>
    </ligand>
</feature>
<feature type="binding site" evidence="1">
    <location>
        <position position="167"/>
    </location>
    <ligand>
        <name>substrate</name>
    </ligand>
</feature>
<feature type="binding site" description="via carbamate group" evidence="1">
    <location>
        <position position="191"/>
    </location>
    <ligand>
        <name>Mg(2+)</name>
        <dbReference type="ChEBI" id="CHEBI:18420"/>
    </ligand>
</feature>
<feature type="binding site" evidence="1">
    <location>
        <position position="193"/>
    </location>
    <ligand>
        <name>Mg(2+)</name>
        <dbReference type="ChEBI" id="CHEBI:18420"/>
    </ligand>
</feature>
<feature type="binding site" evidence="1">
    <location>
        <position position="194"/>
    </location>
    <ligand>
        <name>Mg(2+)</name>
        <dbReference type="ChEBI" id="CHEBI:18420"/>
    </ligand>
</feature>
<feature type="binding site" evidence="1">
    <location>
        <position position="285"/>
    </location>
    <ligand>
        <name>substrate</name>
    </ligand>
</feature>
<feature type="binding site" evidence="1">
    <location>
        <position position="317"/>
    </location>
    <ligand>
        <name>substrate</name>
    </ligand>
</feature>
<feature type="binding site" evidence="1">
    <location>
        <position position="369"/>
    </location>
    <ligand>
        <name>substrate</name>
    </ligand>
</feature>
<feature type="site" description="Transition state stabilizer" evidence="1">
    <location>
        <position position="324"/>
    </location>
</feature>
<feature type="modified residue" description="N6,N6,N6-trimethyllysine" evidence="1">
    <location>
        <position position="4"/>
    </location>
</feature>
<feature type="modified residue" description="N6-carboxylysine" evidence="1">
    <location>
        <position position="191"/>
    </location>
</feature>
<feature type="disulfide bond" description="Interchain; in linked form" evidence="1">
    <location>
        <position position="237"/>
    </location>
</feature>
<feature type="non-terminal residue" evidence="3">
    <location>
        <position position="1"/>
    </location>
</feature>
<feature type="non-terminal residue" evidence="3">
    <location>
        <position position="440"/>
    </location>
</feature>
<sequence>VGFKAGVKDYRLNYYTPDYQTKETDILAAFRMTPQPGVPPEEAGAAVAAESSTGTWTTVWTDGLTSLDRYKGRCYDLEAVPGEENQYIAYVAYPLDLFEEGSVTNLFTSIVGNVFGFKALRALRLEDLRIPPAYSKTFQGPPHGIQVERDKLNKYGRPLLGCTIKPKLGLSAKNYGRAVYECLRGGLDFTKDDENVNSQPFMRWRDRFLFVAEALYKSQAETGEIKGHYLNATAGTCEEMLKRAEFARELGAPIVMHDYLTGGFTANTTLAHYCRDNGLLLHIHRAMHAVIDRQKNHGMHFRVLAKALRLSGGDHIHAGTVVGKLEGERQVTLGFVDLLRDDYIEKDRSRGIYFTQDWVSLPGVLPVASGGIHVWHXPALTEIFGDDSVLQFGGGTLGHPWGNAPGAVANRVALEACVQARNEGRDLAREGNEVIREATK</sequence>
<protein>
    <recommendedName>
        <fullName evidence="1">Ribulose bisphosphate carboxylase large chain</fullName>
        <shortName evidence="1">RuBisCO large subunit</shortName>
        <ecNumber evidence="1">4.1.1.39</ecNumber>
    </recommendedName>
</protein>
<reference evidence="2" key="1">
    <citation type="journal article" date="1998" name="Am. J. Bot.">
        <title>Circumscription and phylogeny of the Orthotrichales (Bryopsida) inferred from rbcL sequence analyses.</title>
        <authorList>
            <person name="Goffinet B."/>
            <person name="Bayer R.J."/>
            <person name="Vitt D.H."/>
        </authorList>
    </citation>
    <scope>NUCLEOTIDE SEQUENCE [GENOMIC DNA]</scope>
    <source>
        <strain>Isolate Ireland 7038</strain>
    </source>
</reference>
<reference evidence="2" key="2">
    <citation type="journal article" date="2000" name="Bryologist">
        <title>Phylogenetic relationships within the Haplolepideous mosses.</title>
        <authorList>
            <person name="La Farge C."/>
            <person name="Mishler B.D."/>
            <person name="Wheeler J.A."/>
            <person name="Wall D.P."/>
            <person name="Johannes K."/>
            <person name="Schaffer S."/>
            <person name="Shaw A.J."/>
        </authorList>
    </citation>
    <scope>NUCLEOTIDE SEQUENCE [MRNA] OF 1-430</scope>
</reference>
<keyword id="KW-0113">Calvin cycle</keyword>
<keyword id="KW-0120">Carbon dioxide fixation</keyword>
<keyword id="KW-0150">Chloroplast</keyword>
<keyword id="KW-1015">Disulfide bond</keyword>
<keyword id="KW-0456">Lyase</keyword>
<keyword id="KW-0460">Magnesium</keyword>
<keyword id="KW-0479">Metal-binding</keyword>
<keyword id="KW-0488">Methylation</keyword>
<keyword id="KW-0503">Monooxygenase</keyword>
<keyword id="KW-0560">Oxidoreductase</keyword>
<keyword id="KW-0601">Photorespiration</keyword>
<keyword id="KW-0602">Photosynthesis</keyword>
<keyword id="KW-0934">Plastid</keyword>
<comment type="function">
    <text evidence="1">RuBisCO catalyzes two reactions: the carboxylation of D-ribulose 1,5-bisphosphate, the primary event in carbon dioxide fixation, as well as the oxidative fragmentation of the pentose substrate in the photorespiration process. Both reactions occur simultaneously and in competition at the same active site.</text>
</comment>
<comment type="catalytic activity">
    <reaction evidence="1">
        <text>2 (2R)-3-phosphoglycerate + 2 H(+) = D-ribulose 1,5-bisphosphate + CO2 + H2O</text>
        <dbReference type="Rhea" id="RHEA:23124"/>
        <dbReference type="ChEBI" id="CHEBI:15377"/>
        <dbReference type="ChEBI" id="CHEBI:15378"/>
        <dbReference type="ChEBI" id="CHEBI:16526"/>
        <dbReference type="ChEBI" id="CHEBI:57870"/>
        <dbReference type="ChEBI" id="CHEBI:58272"/>
        <dbReference type="EC" id="4.1.1.39"/>
    </reaction>
</comment>
<comment type="catalytic activity">
    <reaction evidence="1">
        <text>D-ribulose 1,5-bisphosphate + O2 = 2-phosphoglycolate + (2R)-3-phosphoglycerate + 2 H(+)</text>
        <dbReference type="Rhea" id="RHEA:36631"/>
        <dbReference type="ChEBI" id="CHEBI:15378"/>
        <dbReference type="ChEBI" id="CHEBI:15379"/>
        <dbReference type="ChEBI" id="CHEBI:57870"/>
        <dbReference type="ChEBI" id="CHEBI:58033"/>
        <dbReference type="ChEBI" id="CHEBI:58272"/>
    </reaction>
</comment>
<comment type="cofactor">
    <cofactor evidence="1">
        <name>Mg(2+)</name>
        <dbReference type="ChEBI" id="CHEBI:18420"/>
    </cofactor>
    <text evidence="1">Binds 1 Mg(2+) ion per subunit.</text>
</comment>
<comment type="subunit">
    <text evidence="1">Heterohexadecamer of 8 large chains and 8 small chains; disulfide-linked. The disulfide link is formed within the large subunit homodimers.</text>
</comment>
<comment type="subcellular location">
    <subcellularLocation>
        <location>Plastid</location>
        <location>Chloroplast</location>
    </subcellularLocation>
</comment>
<comment type="PTM">
    <text evidence="1">The disulfide bond which can form in the large chain dimeric partners within the hexadecamer appears to be associated with oxidative stress and protein turnover.</text>
</comment>
<comment type="miscellaneous">
    <text evidence="1">The basic functional RuBisCO is composed of a large chain homodimer in a 'head-to-tail' conformation. In form I RuBisCO this homodimer is arranged in a barrel-like tetramer with the small subunits forming a tetrameric 'cap' on each end of the 'barrel'.</text>
</comment>
<comment type="similarity">
    <text evidence="1">Belongs to the RuBisCO large chain family. Type I subfamily.</text>
</comment>
<dbReference type="EC" id="4.1.1.39" evidence="1"/>
<dbReference type="EMBL" id="AF005549">
    <property type="protein sequence ID" value="AAC96063.1"/>
    <property type="molecule type" value="Genomic_DNA"/>
</dbReference>
<dbReference type="EMBL" id="AF231313">
    <property type="protein sequence ID" value="AAG13838.1"/>
    <property type="molecule type" value="mRNA"/>
</dbReference>
<dbReference type="GO" id="GO:0009507">
    <property type="term" value="C:chloroplast"/>
    <property type="evidence" value="ECO:0007669"/>
    <property type="project" value="UniProtKB-SubCell"/>
</dbReference>
<dbReference type="GO" id="GO:0000287">
    <property type="term" value="F:magnesium ion binding"/>
    <property type="evidence" value="ECO:0007669"/>
    <property type="project" value="InterPro"/>
</dbReference>
<dbReference type="GO" id="GO:0004497">
    <property type="term" value="F:monooxygenase activity"/>
    <property type="evidence" value="ECO:0007669"/>
    <property type="project" value="UniProtKB-KW"/>
</dbReference>
<dbReference type="GO" id="GO:0016984">
    <property type="term" value="F:ribulose-bisphosphate carboxylase activity"/>
    <property type="evidence" value="ECO:0007669"/>
    <property type="project" value="UniProtKB-EC"/>
</dbReference>
<dbReference type="GO" id="GO:0009853">
    <property type="term" value="P:photorespiration"/>
    <property type="evidence" value="ECO:0007669"/>
    <property type="project" value="UniProtKB-KW"/>
</dbReference>
<dbReference type="GO" id="GO:0019253">
    <property type="term" value="P:reductive pentose-phosphate cycle"/>
    <property type="evidence" value="ECO:0007669"/>
    <property type="project" value="UniProtKB-KW"/>
</dbReference>
<dbReference type="CDD" id="cd08212">
    <property type="entry name" value="RuBisCO_large_I"/>
    <property type="match status" value="1"/>
</dbReference>
<dbReference type="FunFam" id="3.20.20.110:FF:000003">
    <property type="entry name" value="Ribulose bisphosphate carboxylase large chain"/>
    <property type="match status" value="1"/>
</dbReference>
<dbReference type="FunFam" id="3.30.70.150:FF:000001">
    <property type="entry name" value="Ribulose bisphosphate carboxylase large chain"/>
    <property type="match status" value="1"/>
</dbReference>
<dbReference type="Gene3D" id="3.20.20.110">
    <property type="entry name" value="Ribulose bisphosphate carboxylase, large subunit, C-terminal domain"/>
    <property type="match status" value="1"/>
</dbReference>
<dbReference type="Gene3D" id="3.30.70.150">
    <property type="entry name" value="RuBisCO large subunit, N-terminal domain"/>
    <property type="match status" value="1"/>
</dbReference>
<dbReference type="HAMAP" id="MF_01338">
    <property type="entry name" value="RuBisCO_L_type1"/>
    <property type="match status" value="1"/>
</dbReference>
<dbReference type="InterPro" id="IPR033966">
    <property type="entry name" value="RuBisCO"/>
</dbReference>
<dbReference type="InterPro" id="IPR020878">
    <property type="entry name" value="RuBisCo_large_chain_AS"/>
</dbReference>
<dbReference type="InterPro" id="IPR000685">
    <property type="entry name" value="RuBisCO_lsu_C"/>
</dbReference>
<dbReference type="InterPro" id="IPR036376">
    <property type="entry name" value="RuBisCO_lsu_C_sf"/>
</dbReference>
<dbReference type="InterPro" id="IPR017443">
    <property type="entry name" value="RuBisCO_lsu_fd_N"/>
</dbReference>
<dbReference type="InterPro" id="IPR036422">
    <property type="entry name" value="RuBisCO_lsu_N_sf"/>
</dbReference>
<dbReference type="InterPro" id="IPR020888">
    <property type="entry name" value="RuBisCO_lsuI"/>
</dbReference>
<dbReference type="NCBIfam" id="NF003252">
    <property type="entry name" value="PRK04208.1"/>
    <property type="match status" value="1"/>
</dbReference>
<dbReference type="PANTHER" id="PTHR42704">
    <property type="entry name" value="RIBULOSE BISPHOSPHATE CARBOXYLASE"/>
    <property type="match status" value="1"/>
</dbReference>
<dbReference type="PANTHER" id="PTHR42704:SF17">
    <property type="entry name" value="RIBULOSE BISPHOSPHATE CARBOXYLASE LARGE CHAIN"/>
    <property type="match status" value="1"/>
</dbReference>
<dbReference type="Pfam" id="PF00016">
    <property type="entry name" value="RuBisCO_large"/>
    <property type="match status" value="1"/>
</dbReference>
<dbReference type="Pfam" id="PF02788">
    <property type="entry name" value="RuBisCO_large_N"/>
    <property type="match status" value="1"/>
</dbReference>
<dbReference type="SFLD" id="SFLDG01052">
    <property type="entry name" value="RuBisCO"/>
    <property type="match status" value="1"/>
</dbReference>
<dbReference type="SFLD" id="SFLDS00014">
    <property type="entry name" value="RuBisCO"/>
    <property type="match status" value="1"/>
</dbReference>
<dbReference type="SFLD" id="SFLDG00301">
    <property type="entry name" value="RuBisCO-like_proteins"/>
    <property type="match status" value="1"/>
</dbReference>
<dbReference type="SUPFAM" id="SSF51649">
    <property type="entry name" value="RuBisCo, C-terminal domain"/>
    <property type="match status" value="1"/>
</dbReference>
<dbReference type="SUPFAM" id="SSF54966">
    <property type="entry name" value="RuBisCO, large subunit, small (N-terminal) domain"/>
    <property type="match status" value="1"/>
</dbReference>
<dbReference type="PROSITE" id="PS00157">
    <property type="entry name" value="RUBISCO_LARGE"/>
    <property type="match status" value="1"/>
</dbReference>